<feature type="chain" id="PRO_0000329507" description="Polyribonucleotide nucleotidyltransferase">
    <location>
        <begin position="1"/>
        <end position="699"/>
    </location>
</feature>
<feature type="domain" description="KH" evidence="1">
    <location>
        <begin position="554"/>
        <end position="613"/>
    </location>
</feature>
<feature type="domain" description="S1 motif" evidence="1">
    <location>
        <begin position="623"/>
        <end position="691"/>
    </location>
</feature>
<feature type="binding site" evidence="1">
    <location>
        <position position="487"/>
    </location>
    <ligand>
        <name>Mg(2+)</name>
        <dbReference type="ChEBI" id="CHEBI:18420"/>
    </ligand>
</feature>
<feature type="binding site" evidence="1">
    <location>
        <position position="493"/>
    </location>
    <ligand>
        <name>Mg(2+)</name>
        <dbReference type="ChEBI" id="CHEBI:18420"/>
    </ligand>
</feature>
<organism>
    <name type="scientific">Azoarcus sp. (strain BH72)</name>
    <dbReference type="NCBI Taxonomy" id="418699"/>
    <lineage>
        <taxon>Bacteria</taxon>
        <taxon>Pseudomonadati</taxon>
        <taxon>Pseudomonadota</taxon>
        <taxon>Betaproteobacteria</taxon>
        <taxon>Rhodocyclales</taxon>
        <taxon>Zoogloeaceae</taxon>
        <taxon>Azoarcus</taxon>
    </lineage>
</organism>
<name>PNP_AZOSB</name>
<proteinExistence type="inferred from homology"/>
<sequence>MPTAIKKTFTYGAHTVTLETGEVARQAGGAVIVNVDDTVVLATVVAAKDAKPGQDFFPLTVDYVEKFYAAGRIPGGFFKREGRPTEKETLTSRLIDRPIRPLFPEGFYNEVQVIVTVLSLNPEVDADIPAMIAASAALSISGIPFDGPIGAARVGYADGQYLLNPTVEQLKTSKLNLVVAGTASAVLMVESEADELSEQVMLGAVVFGHEQMQAAINAINELVEVAGKPEWNWQPPAANDALVARVKELALADVEEAFRITSKQARTERLSEIRKRTIAALTDGVDNAPSENEIKDIFFTLEAGTVRSRILNGEPRIDGRDTRTVRPIDIRVGVLPRTHGSALFTRGETQALVVATLGTGRDEQIIDAIAGEYKERFMLHYNFPPFSTGETGRFGVTKRREIGHGRLAKRALVAMLPKGEDFSYTIRVVSEITESNGSSSMASVCGGSLALMDAGVPMKDHVAGIAMGLIKDGNRFAVLTDILGDEDHLGDMDFKVAGTENGVTALQMDIKIQGITKEIMQVALAQAGEGRLHILKQMKDALGVARGEVSEFAPRMLNMKINPEKIRDVIGKGGAVIRALQEETGTVIEIEDDGSITISSVSAEGAQKAKARIEDITAEVEVGKVYEGTVVRLLDFGAIVNILPGRDGLLHVSQIANERVNNVGDYVKEGQAVRVKVLETDERGKIRLSMKALLNENAG</sequence>
<accession>A1K7B5</accession>
<protein>
    <recommendedName>
        <fullName evidence="1">Polyribonucleotide nucleotidyltransferase</fullName>
        <ecNumber evidence="1">2.7.7.8</ecNumber>
    </recommendedName>
    <alternativeName>
        <fullName evidence="1">Polynucleotide phosphorylase</fullName>
        <shortName evidence="1">PNPase</shortName>
    </alternativeName>
</protein>
<dbReference type="EC" id="2.7.7.8" evidence="1"/>
<dbReference type="EMBL" id="AM406670">
    <property type="protein sequence ID" value="CAL94720.1"/>
    <property type="molecule type" value="Genomic_DNA"/>
</dbReference>
<dbReference type="RefSeq" id="WP_011765834.1">
    <property type="nucleotide sequence ID" value="NZ_CP016210.1"/>
</dbReference>
<dbReference type="SMR" id="A1K7B5"/>
<dbReference type="STRING" id="62928.azo2103"/>
<dbReference type="KEGG" id="aoa:dqs_2235"/>
<dbReference type="KEGG" id="azo:azo2103"/>
<dbReference type="eggNOG" id="COG1185">
    <property type="taxonomic scope" value="Bacteria"/>
</dbReference>
<dbReference type="HOGENOM" id="CLU_004217_2_2_4"/>
<dbReference type="OrthoDB" id="9804305at2"/>
<dbReference type="Proteomes" id="UP000002588">
    <property type="component" value="Chromosome"/>
</dbReference>
<dbReference type="GO" id="GO:0005829">
    <property type="term" value="C:cytosol"/>
    <property type="evidence" value="ECO:0007669"/>
    <property type="project" value="TreeGrafter"/>
</dbReference>
<dbReference type="GO" id="GO:0000175">
    <property type="term" value="F:3'-5'-RNA exonuclease activity"/>
    <property type="evidence" value="ECO:0007669"/>
    <property type="project" value="TreeGrafter"/>
</dbReference>
<dbReference type="GO" id="GO:0000287">
    <property type="term" value="F:magnesium ion binding"/>
    <property type="evidence" value="ECO:0007669"/>
    <property type="project" value="UniProtKB-UniRule"/>
</dbReference>
<dbReference type="GO" id="GO:0004654">
    <property type="term" value="F:polyribonucleotide nucleotidyltransferase activity"/>
    <property type="evidence" value="ECO:0007669"/>
    <property type="project" value="UniProtKB-UniRule"/>
</dbReference>
<dbReference type="GO" id="GO:0003723">
    <property type="term" value="F:RNA binding"/>
    <property type="evidence" value="ECO:0007669"/>
    <property type="project" value="UniProtKB-UniRule"/>
</dbReference>
<dbReference type="GO" id="GO:0006402">
    <property type="term" value="P:mRNA catabolic process"/>
    <property type="evidence" value="ECO:0007669"/>
    <property type="project" value="UniProtKB-UniRule"/>
</dbReference>
<dbReference type="GO" id="GO:0006396">
    <property type="term" value="P:RNA processing"/>
    <property type="evidence" value="ECO:0007669"/>
    <property type="project" value="InterPro"/>
</dbReference>
<dbReference type="CDD" id="cd02393">
    <property type="entry name" value="KH-I_PNPase"/>
    <property type="match status" value="1"/>
</dbReference>
<dbReference type="CDD" id="cd11363">
    <property type="entry name" value="RNase_PH_PNPase_1"/>
    <property type="match status" value="1"/>
</dbReference>
<dbReference type="CDD" id="cd11364">
    <property type="entry name" value="RNase_PH_PNPase_2"/>
    <property type="match status" value="1"/>
</dbReference>
<dbReference type="CDD" id="cd04472">
    <property type="entry name" value="S1_PNPase"/>
    <property type="match status" value="1"/>
</dbReference>
<dbReference type="FunFam" id="2.40.50.140:FF:000023">
    <property type="entry name" value="Polyribonucleotide nucleotidyltransferase"/>
    <property type="match status" value="1"/>
</dbReference>
<dbReference type="FunFam" id="3.30.1370.10:FF:000001">
    <property type="entry name" value="Polyribonucleotide nucleotidyltransferase"/>
    <property type="match status" value="1"/>
</dbReference>
<dbReference type="FunFam" id="3.30.230.70:FF:000001">
    <property type="entry name" value="Polyribonucleotide nucleotidyltransferase"/>
    <property type="match status" value="1"/>
</dbReference>
<dbReference type="FunFam" id="3.30.230.70:FF:000002">
    <property type="entry name" value="Polyribonucleotide nucleotidyltransferase"/>
    <property type="match status" value="1"/>
</dbReference>
<dbReference type="Gene3D" id="3.30.230.70">
    <property type="entry name" value="GHMP Kinase, N-terminal domain"/>
    <property type="match status" value="2"/>
</dbReference>
<dbReference type="Gene3D" id="3.30.1370.10">
    <property type="entry name" value="K Homology domain, type 1"/>
    <property type="match status" value="1"/>
</dbReference>
<dbReference type="Gene3D" id="2.40.50.140">
    <property type="entry name" value="Nucleic acid-binding proteins"/>
    <property type="match status" value="1"/>
</dbReference>
<dbReference type="HAMAP" id="MF_01595">
    <property type="entry name" value="PNPase"/>
    <property type="match status" value="1"/>
</dbReference>
<dbReference type="InterPro" id="IPR001247">
    <property type="entry name" value="ExoRNase_PH_dom1"/>
</dbReference>
<dbReference type="InterPro" id="IPR015847">
    <property type="entry name" value="ExoRNase_PH_dom2"/>
</dbReference>
<dbReference type="InterPro" id="IPR036345">
    <property type="entry name" value="ExoRNase_PH_dom2_sf"/>
</dbReference>
<dbReference type="InterPro" id="IPR004087">
    <property type="entry name" value="KH_dom"/>
</dbReference>
<dbReference type="InterPro" id="IPR004088">
    <property type="entry name" value="KH_dom_type_1"/>
</dbReference>
<dbReference type="InterPro" id="IPR036612">
    <property type="entry name" value="KH_dom_type_1_sf"/>
</dbReference>
<dbReference type="InterPro" id="IPR012340">
    <property type="entry name" value="NA-bd_OB-fold"/>
</dbReference>
<dbReference type="InterPro" id="IPR012162">
    <property type="entry name" value="PNPase"/>
</dbReference>
<dbReference type="InterPro" id="IPR027408">
    <property type="entry name" value="PNPase/RNase_PH_dom_sf"/>
</dbReference>
<dbReference type="InterPro" id="IPR015848">
    <property type="entry name" value="PNPase_PH_RNA-bd_bac/org-type"/>
</dbReference>
<dbReference type="InterPro" id="IPR020568">
    <property type="entry name" value="Ribosomal_Su5_D2-typ_SF"/>
</dbReference>
<dbReference type="InterPro" id="IPR003029">
    <property type="entry name" value="S1_domain"/>
</dbReference>
<dbReference type="NCBIfam" id="TIGR03591">
    <property type="entry name" value="polynuc_phos"/>
    <property type="match status" value="1"/>
</dbReference>
<dbReference type="NCBIfam" id="NF008805">
    <property type="entry name" value="PRK11824.1"/>
    <property type="match status" value="1"/>
</dbReference>
<dbReference type="PANTHER" id="PTHR11252">
    <property type="entry name" value="POLYRIBONUCLEOTIDE NUCLEOTIDYLTRANSFERASE"/>
    <property type="match status" value="1"/>
</dbReference>
<dbReference type="PANTHER" id="PTHR11252:SF0">
    <property type="entry name" value="POLYRIBONUCLEOTIDE NUCLEOTIDYLTRANSFERASE 1, MITOCHONDRIAL"/>
    <property type="match status" value="1"/>
</dbReference>
<dbReference type="Pfam" id="PF00013">
    <property type="entry name" value="KH_1"/>
    <property type="match status" value="1"/>
</dbReference>
<dbReference type="Pfam" id="PF03726">
    <property type="entry name" value="PNPase"/>
    <property type="match status" value="1"/>
</dbReference>
<dbReference type="Pfam" id="PF01138">
    <property type="entry name" value="RNase_PH"/>
    <property type="match status" value="2"/>
</dbReference>
<dbReference type="Pfam" id="PF03725">
    <property type="entry name" value="RNase_PH_C"/>
    <property type="match status" value="2"/>
</dbReference>
<dbReference type="Pfam" id="PF00575">
    <property type="entry name" value="S1"/>
    <property type="match status" value="1"/>
</dbReference>
<dbReference type="PIRSF" id="PIRSF005499">
    <property type="entry name" value="PNPase"/>
    <property type="match status" value="1"/>
</dbReference>
<dbReference type="SMART" id="SM00322">
    <property type="entry name" value="KH"/>
    <property type="match status" value="1"/>
</dbReference>
<dbReference type="SMART" id="SM00316">
    <property type="entry name" value="S1"/>
    <property type="match status" value="1"/>
</dbReference>
<dbReference type="SUPFAM" id="SSF54791">
    <property type="entry name" value="Eukaryotic type KH-domain (KH-domain type I)"/>
    <property type="match status" value="1"/>
</dbReference>
<dbReference type="SUPFAM" id="SSF50249">
    <property type="entry name" value="Nucleic acid-binding proteins"/>
    <property type="match status" value="1"/>
</dbReference>
<dbReference type="SUPFAM" id="SSF55666">
    <property type="entry name" value="Ribonuclease PH domain 2-like"/>
    <property type="match status" value="2"/>
</dbReference>
<dbReference type="SUPFAM" id="SSF54211">
    <property type="entry name" value="Ribosomal protein S5 domain 2-like"/>
    <property type="match status" value="2"/>
</dbReference>
<dbReference type="PROSITE" id="PS50084">
    <property type="entry name" value="KH_TYPE_1"/>
    <property type="match status" value="1"/>
</dbReference>
<dbReference type="PROSITE" id="PS50126">
    <property type="entry name" value="S1"/>
    <property type="match status" value="1"/>
</dbReference>
<reference key="1">
    <citation type="journal article" date="2006" name="Nat. Biotechnol.">
        <title>Complete genome of the mutualistic, N2-fixing grass endophyte Azoarcus sp. strain BH72.</title>
        <authorList>
            <person name="Krause A."/>
            <person name="Ramakumar A."/>
            <person name="Bartels D."/>
            <person name="Battistoni F."/>
            <person name="Bekel T."/>
            <person name="Boch J."/>
            <person name="Boehm M."/>
            <person name="Friedrich F."/>
            <person name="Hurek T."/>
            <person name="Krause L."/>
            <person name="Linke B."/>
            <person name="McHardy A.C."/>
            <person name="Sarkar A."/>
            <person name="Schneiker S."/>
            <person name="Syed A.A."/>
            <person name="Thauer R."/>
            <person name="Vorhoelter F.-J."/>
            <person name="Weidner S."/>
            <person name="Puehler A."/>
            <person name="Reinhold-Hurek B."/>
            <person name="Kaiser O."/>
            <person name="Goesmann A."/>
        </authorList>
    </citation>
    <scope>NUCLEOTIDE SEQUENCE [LARGE SCALE GENOMIC DNA]</scope>
    <source>
        <strain>BH72</strain>
    </source>
</reference>
<evidence type="ECO:0000255" key="1">
    <source>
        <dbReference type="HAMAP-Rule" id="MF_01595"/>
    </source>
</evidence>
<keyword id="KW-0963">Cytoplasm</keyword>
<keyword id="KW-0460">Magnesium</keyword>
<keyword id="KW-0479">Metal-binding</keyword>
<keyword id="KW-0548">Nucleotidyltransferase</keyword>
<keyword id="KW-1185">Reference proteome</keyword>
<keyword id="KW-0694">RNA-binding</keyword>
<keyword id="KW-0808">Transferase</keyword>
<comment type="function">
    <text evidence="1">Involved in mRNA degradation. Catalyzes the phosphorolysis of single-stranded polyribonucleotides processively in the 3'- to 5'-direction.</text>
</comment>
<comment type="catalytic activity">
    <reaction evidence="1">
        <text>RNA(n+1) + phosphate = RNA(n) + a ribonucleoside 5'-diphosphate</text>
        <dbReference type="Rhea" id="RHEA:22096"/>
        <dbReference type="Rhea" id="RHEA-COMP:14527"/>
        <dbReference type="Rhea" id="RHEA-COMP:17342"/>
        <dbReference type="ChEBI" id="CHEBI:43474"/>
        <dbReference type="ChEBI" id="CHEBI:57930"/>
        <dbReference type="ChEBI" id="CHEBI:140395"/>
        <dbReference type="EC" id="2.7.7.8"/>
    </reaction>
</comment>
<comment type="cofactor">
    <cofactor evidence="1">
        <name>Mg(2+)</name>
        <dbReference type="ChEBI" id="CHEBI:18420"/>
    </cofactor>
</comment>
<comment type="subcellular location">
    <subcellularLocation>
        <location evidence="1">Cytoplasm</location>
    </subcellularLocation>
</comment>
<comment type="similarity">
    <text evidence="1">Belongs to the polyribonucleotide nucleotidyltransferase family.</text>
</comment>
<gene>
    <name evidence="1" type="primary">pnp</name>
    <name type="ordered locus">azo2103</name>
</gene>